<accession>Q2YJH4</accession>
<reference key="1">
    <citation type="journal article" date="2005" name="Infect. Immun.">
        <title>Whole-genome analyses of speciation events in pathogenic Brucellae.</title>
        <authorList>
            <person name="Chain P.S."/>
            <person name="Comerci D.J."/>
            <person name="Tolmasky M.E."/>
            <person name="Larimer F.W."/>
            <person name="Malfatti S.A."/>
            <person name="Vergez L.M."/>
            <person name="Aguero F."/>
            <person name="Land M.L."/>
            <person name="Ugalde R.A."/>
            <person name="Garcia E."/>
        </authorList>
    </citation>
    <scope>NUCLEOTIDE SEQUENCE [LARGE SCALE GENOMIC DNA]</scope>
    <source>
        <strain>2308</strain>
    </source>
</reference>
<dbReference type="EC" id="7.2.2.20" evidence="1"/>
<dbReference type="EMBL" id="AM040265">
    <property type="protein sequence ID" value="CAJ13246.1"/>
    <property type="molecule type" value="Genomic_DNA"/>
</dbReference>
<dbReference type="RefSeq" id="WP_002966660.1">
    <property type="nucleotide sequence ID" value="NZ_KN046823.1"/>
</dbReference>
<dbReference type="SMR" id="Q2YJH4"/>
<dbReference type="STRING" id="359391.BAB2_1080"/>
<dbReference type="KEGG" id="bmf:BAB2_1080"/>
<dbReference type="HOGENOM" id="CLU_000604_1_11_5"/>
<dbReference type="PRO" id="PR:Q2YJH4"/>
<dbReference type="Proteomes" id="UP000002719">
    <property type="component" value="Chromosome II"/>
</dbReference>
<dbReference type="GO" id="GO:0005886">
    <property type="term" value="C:plasma membrane"/>
    <property type="evidence" value="ECO:0007669"/>
    <property type="project" value="UniProtKB-SubCell"/>
</dbReference>
<dbReference type="GO" id="GO:0015633">
    <property type="term" value="F:ABC-type zinc transporter activity"/>
    <property type="evidence" value="ECO:0007669"/>
    <property type="project" value="UniProtKB-EC"/>
</dbReference>
<dbReference type="GO" id="GO:0005524">
    <property type="term" value="F:ATP binding"/>
    <property type="evidence" value="ECO:0007669"/>
    <property type="project" value="UniProtKB-KW"/>
</dbReference>
<dbReference type="GO" id="GO:0016887">
    <property type="term" value="F:ATP hydrolysis activity"/>
    <property type="evidence" value="ECO:0007669"/>
    <property type="project" value="InterPro"/>
</dbReference>
<dbReference type="GO" id="GO:0010043">
    <property type="term" value="P:response to zinc ion"/>
    <property type="evidence" value="ECO:0007669"/>
    <property type="project" value="TreeGrafter"/>
</dbReference>
<dbReference type="Gene3D" id="3.40.50.300">
    <property type="entry name" value="P-loop containing nucleotide triphosphate hydrolases"/>
    <property type="match status" value="1"/>
</dbReference>
<dbReference type="InterPro" id="IPR003593">
    <property type="entry name" value="AAA+_ATPase"/>
</dbReference>
<dbReference type="InterPro" id="IPR003439">
    <property type="entry name" value="ABC_transporter-like_ATP-bd"/>
</dbReference>
<dbReference type="InterPro" id="IPR017871">
    <property type="entry name" value="ABC_transporter-like_CS"/>
</dbReference>
<dbReference type="InterPro" id="IPR050153">
    <property type="entry name" value="Metal_Ion_Import_ABC"/>
</dbReference>
<dbReference type="InterPro" id="IPR027417">
    <property type="entry name" value="P-loop_NTPase"/>
</dbReference>
<dbReference type="PANTHER" id="PTHR42734">
    <property type="entry name" value="METAL TRANSPORT SYSTEM ATP-BINDING PROTEIN TM_0124-RELATED"/>
    <property type="match status" value="1"/>
</dbReference>
<dbReference type="PANTHER" id="PTHR42734:SF9">
    <property type="entry name" value="ZINC IMPORT ATP-BINDING PROTEIN ZNUC"/>
    <property type="match status" value="1"/>
</dbReference>
<dbReference type="Pfam" id="PF00005">
    <property type="entry name" value="ABC_tran"/>
    <property type="match status" value="1"/>
</dbReference>
<dbReference type="SMART" id="SM00382">
    <property type="entry name" value="AAA"/>
    <property type="match status" value="1"/>
</dbReference>
<dbReference type="SUPFAM" id="SSF52540">
    <property type="entry name" value="P-loop containing nucleoside triphosphate hydrolases"/>
    <property type="match status" value="1"/>
</dbReference>
<dbReference type="PROSITE" id="PS00211">
    <property type="entry name" value="ABC_TRANSPORTER_1"/>
    <property type="match status" value="1"/>
</dbReference>
<dbReference type="PROSITE" id="PS50893">
    <property type="entry name" value="ABC_TRANSPORTER_2"/>
    <property type="match status" value="1"/>
</dbReference>
<dbReference type="PROSITE" id="PS51298">
    <property type="entry name" value="ZNUC"/>
    <property type="match status" value="1"/>
</dbReference>
<gene>
    <name evidence="1" type="primary">znuC</name>
    <name type="ordered locus">BAB2_1080</name>
</gene>
<comment type="function">
    <text evidence="1">Part of the ABC transporter complex ZnuABC involved in zinc import. Responsible for energy coupling to the transport system.</text>
</comment>
<comment type="catalytic activity">
    <reaction evidence="1">
        <text>Zn(2+)(out) + ATP(in) + H2O(in) = Zn(2+)(in) + ADP(in) + phosphate(in) + H(+)(in)</text>
        <dbReference type="Rhea" id="RHEA:29795"/>
        <dbReference type="ChEBI" id="CHEBI:15377"/>
        <dbReference type="ChEBI" id="CHEBI:15378"/>
        <dbReference type="ChEBI" id="CHEBI:29105"/>
        <dbReference type="ChEBI" id="CHEBI:30616"/>
        <dbReference type="ChEBI" id="CHEBI:43474"/>
        <dbReference type="ChEBI" id="CHEBI:456216"/>
        <dbReference type="EC" id="7.2.2.20"/>
    </reaction>
</comment>
<comment type="subunit">
    <text evidence="1">The complex is composed of two ATP-binding proteins (ZnuC), two transmembrane proteins (ZnuB) and a solute-binding protein (ZnuA).</text>
</comment>
<comment type="subcellular location">
    <subcellularLocation>
        <location evidence="1">Cell inner membrane</location>
        <topology evidence="1">Peripheral membrane protein</topology>
    </subcellularLocation>
</comment>
<comment type="similarity">
    <text evidence="1">Belongs to the ABC transporter superfamily. Zinc importer (TC 3.A.1.15.5) family.</text>
</comment>
<keyword id="KW-0067">ATP-binding</keyword>
<keyword id="KW-0997">Cell inner membrane</keyword>
<keyword id="KW-1003">Cell membrane</keyword>
<keyword id="KW-0406">Ion transport</keyword>
<keyword id="KW-0472">Membrane</keyword>
<keyword id="KW-0547">Nucleotide-binding</keyword>
<keyword id="KW-1185">Reference proteome</keyword>
<keyword id="KW-1278">Translocase</keyword>
<keyword id="KW-0813">Transport</keyword>
<keyword id="KW-0862">Zinc</keyword>
<keyword id="KW-0864">Zinc transport</keyword>
<organism>
    <name type="scientific">Brucella abortus (strain 2308)</name>
    <dbReference type="NCBI Taxonomy" id="359391"/>
    <lineage>
        <taxon>Bacteria</taxon>
        <taxon>Pseudomonadati</taxon>
        <taxon>Pseudomonadota</taxon>
        <taxon>Alphaproteobacteria</taxon>
        <taxon>Hyphomicrobiales</taxon>
        <taxon>Brucellaceae</taxon>
        <taxon>Brucella/Ochrobactrum group</taxon>
        <taxon>Brucella</taxon>
    </lineage>
</organism>
<evidence type="ECO:0000255" key="1">
    <source>
        <dbReference type="HAMAP-Rule" id="MF_01725"/>
    </source>
</evidence>
<evidence type="ECO:0000256" key="2">
    <source>
        <dbReference type="SAM" id="MobiDB-lite"/>
    </source>
</evidence>
<name>ZNUC_BRUA2</name>
<feature type="chain" id="PRO_0000281496" description="Zinc import ATP-binding protein ZnuC">
    <location>
        <begin position="1"/>
        <end position="298"/>
    </location>
</feature>
<feature type="domain" description="ABC transporter" evidence="1">
    <location>
        <begin position="17"/>
        <end position="232"/>
    </location>
</feature>
<feature type="region of interest" description="Disordered" evidence="2">
    <location>
        <begin position="273"/>
        <end position="298"/>
    </location>
</feature>
<feature type="compositionally biased region" description="Basic and acidic residues" evidence="2">
    <location>
        <begin position="276"/>
        <end position="298"/>
    </location>
</feature>
<feature type="binding site" evidence="1">
    <location>
        <begin position="49"/>
        <end position="56"/>
    </location>
    <ligand>
        <name>ATP</name>
        <dbReference type="ChEBI" id="CHEBI:30616"/>
    </ligand>
</feature>
<protein>
    <recommendedName>
        <fullName evidence="1">Zinc import ATP-binding protein ZnuC</fullName>
        <ecNumber evidence="1">7.2.2.20</ecNumber>
    </recommendedName>
</protein>
<proteinExistence type="inferred from homology"/>
<sequence>MDKKSSHPAGAARDILIELRNAGVYRDGRWLVRNVDLSVERGEIVTLIGPNGAGKSTAAKMALHILKPDEGMVSHKPGLRIGYVPQKINIDRTLPLSVERLMTLTGPLPRKEIDAALEAVGIAHLAKAETAHLSGGEFQRALMARALARKPDIMVLDEPVQGVDFSGEAALYELIARLRDDTGCGVLLISHDLHLVMAATDRVICLNGHVCCSGTPRDVTSSPEYVRLFGSRAVGPLAVYEHHHDHTHLPDGRVLYADGTTADPIAGSTMGPRGHCHVEDGHHHDHEHHHHEGGQPRA</sequence>